<name>GPN2_DICDI</name>
<keyword id="KW-0342">GTP-binding</keyword>
<keyword id="KW-0378">Hydrolase</keyword>
<keyword id="KW-0547">Nucleotide-binding</keyword>
<keyword id="KW-1185">Reference proteome</keyword>
<protein>
    <recommendedName>
        <fullName evidence="2">GPN-loop GTPase 2 homolog</fullName>
    </recommendedName>
    <alternativeName>
        <fullName evidence="2">ATP-binding domain 1 family member B homolog</fullName>
    </alternativeName>
</protein>
<organism>
    <name type="scientific">Dictyostelium discoideum</name>
    <name type="common">Social amoeba</name>
    <dbReference type="NCBI Taxonomy" id="44689"/>
    <lineage>
        <taxon>Eukaryota</taxon>
        <taxon>Amoebozoa</taxon>
        <taxon>Evosea</taxon>
        <taxon>Eumycetozoa</taxon>
        <taxon>Dictyostelia</taxon>
        <taxon>Dictyosteliales</taxon>
        <taxon>Dictyosteliaceae</taxon>
        <taxon>Dictyostelium</taxon>
    </lineage>
</organism>
<reference key="1">
    <citation type="journal article" date="2005" name="Nature">
        <title>The genome of the social amoeba Dictyostelium discoideum.</title>
        <authorList>
            <person name="Eichinger L."/>
            <person name="Pachebat J.A."/>
            <person name="Gloeckner G."/>
            <person name="Rajandream M.A."/>
            <person name="Sucgang R."/>
            <person name="Berriman M."/>
            <person name="Song J."/>
            <person name="Olsen R."/>
            <person name="Szafranski K."/>
            <person name="Xu Q."/>
            <person name="Tunggal B."/>
            <person name="Kummerfeld S."/>
            <person name="Madera M."/>
            <person name="Konfortov B.A."/>
            <person name="Rivero F."/>
            <person name="Bankier A.T."/>
            <person name="Lehmann R."/>
            <person name="Hamlin N."/>
            <person name="Davies R."/>
            <person name="Gaudet P."/>
            <person name="Fey P."/>
            <person name="Pilcher K."/>
            <person name="Chen G."/>
            <person name="Saunders D."/>
            <person name="Sodergren E.J."/>
            <person name="Davis P."/>
            <person name="Kerhornou A."/>
            <person name="Nie X."/>
            <person name="Hall N."/>
            <person name="Anjard C."/>
            <person name="Hemphill L."/>
            <person name="Bason N."/>
            <person name="Farbrother P."/>
            <person name="Desany B."/>
            <person name="Just E."/>
            <person name="Morio T."/>
            <person name="Rost R."/>
            <person name="Churcher C.M."/>
            <person name="Cooper J."/>
            <person name="Haydock S."/>
            <person name="van Driessche N."/>
            <person name="Cronin A."/>
            <person name="Goodhead I."/>
            <person name="Muzny D.M."/>
            <person name="Mourier T."/>
            <person name="Pain A."/>
            <person name="Lu M."/>
            <person name="Harper D."/>
            <person name="Lindsay R."/>
            <person name="Hauser H."/>
            <person name="James K.D."/>
            <person name="Quiles M."/>
            <person name="Madan Babu M."/>
            <person name="Saito T."/>
            <person name="Buchrieser C."/>
            <person name="Wardroper A."/>
            <person name="Felder M."/>
            <person name="Thangavelu M."/>
            <person name="Johnson D."/>
            <person name="Knights A."/>
            <person name="Loulseged H."/>
            <person name="Mungall K.L."/>
            <person name="Oliver K."/>
            <person name="Price C."/>
            <person name="Quail M.A."/>
            <person name="Urushihara H."/>
            <person name="Hernandez J."/>
            <person name="Rabbinowitsch E."/>
            <person name="Steffen D."/>
            <person name="Sanders M."/>
            <person name="Ma J."/>
            <person name="Kohara Y."/>
            <person name="Sharp S."/>
            <person name="Simmonds M.N."/>
            <person name="Spiegler S."/>
            <person name="Tivey A."/>
            <person name="Sugano S."/>
            <person name="White B."/>
            <person name="Walker D."/>
            <person name="Woodward J.R."/>
            <person name="Winckler T."/>
            <person name="Tanaka Y."/>
            <person name="Shaulsky G."/>
            <person name="Schleicher M."/>
            <person name="Weinstock G.M."/>
            <person name="Rosenthal A."/>
            <person name="Cox E.C."/>
            <person name="Chisholm R.L."/>
            <person name="Gibbs R.A."/>
            <person name="Loomis W.F."/>
            <person name="Platzer M."/>
            <person name="Kay R.R."/>
            <person name="Williams J.G."/>
            <person name="Dear P.H."/>
            <person name="Noegel A.A."/>
            <person name="Barrell B.G."/>
            <person name="Kuspa A."/>
        </authorList>
    </citation>
    <scope>NUCLEOTIDE SEQUENCE [LARGE SCALE GENOMIC DNA]</scope>
    <source>
        <strain>AX4</strain>
    </source>
</reference>
<sequence length="315" mass="36364">MGFGQVVIGPPGSGKTVYCNGMSQFLQSIGRKVSIINLDPSNENIPYEPAVNIQELIDFQTVVNETDLGPNGGLIFCMEYLEKNLDWLKEKLLPLKDHYIIFDCPGQVELYTHYKIISNILDNIMKWSFRLTVIQVFDSFYCKNPSNFISILLVSLSGMVRIELPHINVLSKMDLIEQNGPLDFNLDFYTDVLDLKYLDAFLDKDPRLKKYSKLNKAIAGVIEDFSLVSFIPLNIMDKKSVANLIASIDKSNGYIYGSLDTNTAILEIQERETQWNFDKYQETQEKYYKSYEDDDVIFENDQDEDYDEFSKYLNR</sequence>
<gene>
    <name type="primary">gpn2</name>
    <name evidence="2" type="synonym">atpbd1b</name>
    <name type="ORF">DDB_G0281787</name>
</gene>
<proteinExistence type="evidence at transcript level"/>
<accession>Q54TE7</accession>
<comment type="function">
    <text evidence="1">Small GTPase required for proper localization of RNA polymerase II and III (RNAPII and RNAPIII). May act at an RNAP assembly step prior to nuclear import.</text>
</comment>
<comment type="subunit">
    <text evidence="1 2">Heterodimers with gpn1 or gpn3. Binds to RNA polymerase II (RNAPII).</text>
</comment>
<comment type="similarity">
    <text evidence="4">Belongs to the GPN-loop GTPase family.</text>
</comment>
<dbReference type="EMBL" id="AAFI02000042">
    <property type="protein sequence ID" value="EAL66655.1"/>
    <property type="molecule type" value="Genomic_DNA"/>
</dbReference>
<dbReference type="RefSeq" id="XP_640644.1">
    <property type="nucleotide sequence ID" value="XM_635552.1"/>
</dbReference>
<dbReference type="SMR" id="Q54TE7"/>
<dbReference type="FunCoup" id="Q54TE7">
    <property type="interactions" value="477"/>
</dbReference>
<dbReference type="STRING" id="44689.Q54TE7"/>
<dbReference type="PaxDb" id="44689-DDB0233479"/>
<dbReference type="EnsemblProtists" id="EAL66655">
    <property type="protein sequence ID" value="EAL66655"/>
    <property type="gene ID" value="DDB_G0281787"/>
</dbReference>
<dbReference type="GeneID" id="8623255"/>
<dbReference type="KEGG" id="ddi:DDB_G0281787"/>
<dbReference type="dictyBase" id="DDB_G0281787">
    <property type="gene designation" value="gpn2"/>
</dbReference>
<dbReference type="VEuPathDB" id="AmoebaDB:DDB_G0281787"/>
<dbReference type="eggNOG" id="KOG1533">
    <property type="taxonomic scope" value="Eukaryota"/>
</dbReference>
<dbReference type="HOGENOM" id="CLU_037460_0_2_1"/>
<dbReference type="InParanoid" id="Q54TE7"/>
<dbReference type="OMA" id="ATHNYFL"/>
<dbReference type="PhylomeDB" id="Q54TE7"/>
<dbReference type="PRO" id="PR:Q54TE7"/>
<dbReference type="Proteomes" id="UP000002195">
    <property type="component" value="Chromosome 3"/>
</dbReference>
<dbReference type="GO" id="GO:0005525">
    <property type="term" value="F:GTP binding"/>
    <property type="evidence" value="ECO:0007669"/>
    <property type="project" value="UniProtKB-KW"/>
</dbReference>
<dbReference type="GO" id="GO:0003924">
    <property type="term" value="F:GTPase activity"/>
    <property type="evidence" value="ECO:0000318"/>
    <property type="project" value="GO_Central"/>
</dbReference>
<dbReference type="CDD" id="cd17871">
    <property type="entry name" value="GPN2"/>
    <property type="match status" value="1"/>
</dbReference>
<dbReference type="FunFam" id="3.40.50.300:FF:002834">
    <property type="entry name" value="GPN-loop GTPase 2"/>
    <property type="match status" value="1"/>
</dbReference>
<dbReference type="Gene3D" id="3.40.50.300">
    <property type="entry name" value="P-loop containing nucleotide triphosphate hydrolases"/>
    <property type="match status" value="1"/>
</dbReference>
<dbReference type="InterPro" id="IPR004130">
    <property type="entry name" value="Gpn"/>
</dbReference>
<dbReference type="InterPro" id="IPR030231">
    <property type="entry name" value="Gpn2"/>
</dbReference>
<dbReference type="InterPro" id="IPR027417">
    <property type="entry name" value="P-loop_NTPase"/>
</dbReference>
<dbReference type="PANTHER" id="PTHR21231:SF3">
    <property type="entry name" value="GPN-LOOP GTPASE 2"/>
    <property type="match status" value="1"/>
</dbReference>
<dbReference type="PANTHER" id="PTHR21231">
    <property type="entry name" value="XPA-BINDING PROTEIN 1-RELATED"/>
    <property type="match status" value="1"/>
</dbReference>
<dbReference type="Pfam" id="PF03029">
    <property type="entry name" value="ATP_bind_1"/>
    <property type="match status" value="1"/>
</dbReference>
<dbReference type="SUPFAM" id="SSF52540">
    <property type="entry name" value="P-loop containing nucleoside triphosphate hydrolases"/>
    <property type="match status" value="1"/>
</dbReference>
<feature type="chain" id="PRO_0000330933" description="GPN-loop GTPase 2 homolog">
    <location>
        <begin position="1"/>
        <end position="315"/>
    </location>
</feature>
<feature type="short sequence motif" description="Gly-Pro-Asn (GPN)-loop; involved in dimer interface" evidence="3">
    <location>
        <begin position="69"/>
        <end position="71"/>
    </location>
</feature>
<feature type="binding site" evidence="3">
    <location>
        <begin position="12"/>
        <end position="17"/>
    </location>
    <ligand>
        <name>GTP</name>
        <dbReference type="ChEBI" id="CHEBI:37565"/>
    </ligand>
</feature>
<feature type="binding site" evidence="3">
    <location>
        <begin position="171"/>
        <end position="174"/>
    </location>
    <ligand>
        <name>GTP</name>
        <dbReference type="ChEBI" id="CHEBI:37565"/>
    </ligand>
</feature>
<feature type="site" description="Stabilizes the phosphate intermediate; shared with dimeric partner" evidence="3">
    <location>
        <position position="71"/>
    </location>
</feature>
<evidence type="ECO:0000250" key="1">
    <source>
        <dbReference type="UniProtKB" id="Q08726"/>
    </source>
</evidence>
<evidence type="ECO:0000250" key="2">
    <source>
        <dbReference type="UniProtKB" id="Q9H9Y4"/>
    </source>
</evidence>
<evidence type="ECO:0000250" key="3">
    <source>
        <dbReference type="UniProtKB" id="Q9UYR9"/>
    </source>
</evidence>
<evidence type="ECO:0000305" key="4"/>